<gene>
    <name evidence="1" type="primary">rplS</name>
    <name type="ordered locus">Bcenmc03_1031</name>
</gene>
<sequence length="130" mass="14515">MNLIAKLEQEEIERALAGKTIPDFAPGDTVIVNVNVVEGNRKRVQAYEGVVIAIRNRGLNSNFIVRKISSGEGVERTFQTYSPLLASIVVKRRGDVRRAKLYYLRERSGKSARIKEKLVSKDRAAAASQE</sequence>
<keyword id="KW-0687">Ribonucleoprotein</keyword>
<keyword id="KW-0689">Ribosomal protein</keyword>
<dbReference type="EMBL" id="CP000958">
    <property type="protein sequence ID" value="ACA90208.1"/>
    <property type="molecule type" value="Genomic_DNA"/>
</dbReference>
<dbReference type="RefSeq" id="WP_006486838.1">
    <property type="nucleotide sequence ID" value="NC_010508.1"/>
</dbReference>
<dbReference type="SMR" id="B1JXU6"/>
<dbReference type="GeneID" id="83047824"/>
<dbReference type="KEGG" id="bcm:Bcenmc03_1031"/>
<dbReference type="HOGENOM" id="CLU_103507_1_0_4"/>
<dbReference type="Proteomes" id="UP000002169">
    <property type="component" value="Chromosome 1"/>
</dbReference>
<dbReference type="GO" id="GO:0022625">
    <property type="term" value="C:cytosolic large ribosomal subunit"/>
    <property type="evidence" value="ECO:0007669"/>
    <property type="project" value="TreeGrafter"/>
</dbReference>
<dbReference type="GO" id="GO:0003735">
    <property type="term" value="F:structural constituent of ribosome"/>
    <property type="evidence" value="ECO:0007669"/>
    <property type="project" value="InterPro"/>
</dbReference>
<dbReference type="GO" id="GO:0006412">
    <property type="term" value="P:translation"/>
    <property type="evidence" value="ECO:0007669"/>
    <property type="project" value="UniProtKB-UniRule"/>
</dbReference>
<dbReference type="FunFam" id="2.30.30.790:FF:000001">
    <property type="entry name" value="50S ribosomal protein L19"/>
    <property type="match status" value="1"/>
</dbReference>
<dbReference type="Gene3D" id="2.30.30.790">
    <property type="match status" value="1"/>
</dbReference>
<dbReference type="HAMAP" id="MF_00402">
    <property type="entry name" value="Ribosomal_bL19"/>
    <property type="match status" value="1"/>
</dbReference>
<dbReference type="InterPro" id="IPR001857">
    <property type="entry name" value="Ribosomal_bL19"/>
</dbReference>
<dbReference type="InterPro" id="IPR018257">
    <property type="entry name" value="Ribosomal_bL19_CS"/>
</dbReference>
<dbReference type="InterPro" id="IPR038657">
    <property type="entry name" value="Ribosomal_bL19_sf"/>
</dbReference>
<dbReference type="InterPro" id="IPR008991">
    <property type="entry name" value="Translation_prot_SH3-like_sf"/>
</dbReference>
<dbReference type="NCBIfam" id="TIGR01024">
    <property type="entry name" value="rplS_bact"/>
    <property type="match status" value="1"/>
</dbReference>
<dbReference type="PANTHER" id="PTHR15680:SF9">
    <property type="entry name" value="LARGE RIBOSOMAL SUBUNIT PROTEIN BL19M"/>
    <property type="match status" value="1"/>
</dbReference>
<dbReference type="PANTHER" id="PTHR15680">
    <property type="entry name" value="RIBOSOMAL PROTEIN L19"/>
    <property type="match status" value="1"/>
</dbReference>
<dbReference type="Pfam" id="PF01245">
    <property type="entry name" value="Ribosomal_L19"/>
    <property type="match status" value="1"/>
</dbReference>
<dbReference type="PIRSF" id="PIRSF002191">
    <property type="entry name" value="Ribosomal_L19"/>
    <property type="match status" value="1"/>
</dbReference>
<dbReference type="PRINTS" id="PR00061">
    <property type="entry name" value="RIBOSOMALL19"/>
</dbReference>
<dbReference type="SUPFAM" id="SSF50104">
    <property type="entry name" value="Translation proteins SH3-like domain"/>
    <property type="match status" value="1"/>
</dbReference>
<dbReference type="PROSITE" id="PS01015">
    <property type="entry name" value="RIBOSOMAL_L19"/>
    <property type="match status" value="1"/>
</dbReference>
<comment type="function">
    <text evidence="1">This protein is located at the 30S-50S ribosomal subunit interface and may play a role in the structure and function of the aminoacyl-tRNA binding site.</text>
</comment>
<comment type="similarity">
    <text evidence="1">Belongs to the bacterial ribosomal protein bL19 family.</text>
</comment>
<protein>
    <recommendedName>
        <fullName evidence="1">Large ribosomal subunit protein bL19</fullName>
    </recommendedName>
    <alternativeName>
        <fullName evidence="2">50S ribosomal protein L19</fullName>
    </alternativeName>
</protein>
<accession>B1JXU6</accession>
<evidence type="ECO:0000255" key="1">
    <source>
        <dbReference type="HAMAP-Rule" id="MF_00402"/>
    </source>
</evidence>
<evidence type="ECO:0000305" key="2"/>
<name>RL19_BURO0</name>
<feature type="chain" id="PRO_1000193799" description="Large ribosomal subunit protein bL19">
    <location>
        <begin position="1"/>
        <end position="130"/>
    </location>
</feature>
<proteinExistence type="inferred from homology"/>
<reference key="1">
    <citation type="submission" date="2008-02" db="EMBL/GenBank/DDBJ databases">
        <title>Complete sequence of chromosome 1 of Burkholderia cenocepacia MC0-3.</title>
        <authorList>
            <person name="Copeland A."/>
            <person name="Lucas S."/>
            <person name="Lapidus A."/>
            <person name="Barry K."/>
            <person name="Bruce D."/>
            <person name="Goodwin L."/>
            <person name="Glavina del Rio T."/>
            <person name="Dalin E."/>
            <person name="Tice H."/>
            <person name="Pitluck S."/>
            <person name="Chain P."/>
            <person name="Malfatti S."/>
            <person name="Shin M."/>
            <person name="Vergez L."/>
            <person name="Schmutz J."/>
            <person name="Larimer F."/>
            <person name="Land M."/>
            <person name="Hauser L."/>
            <person name="Kyrpides N."/>
            <person name="Mikhailova N."/>
            <person name="Tiedje J."/>
            <person name="Richardson P."/>
        </authorList>
    </citation>
    <scope>NUCLEOTIDE SEQUENCE [LARGE SCALE GENOMIC DNA]</scope>
    <source>
        <strain>MC0-3</strain>
    </source>
</reference>
<organism>
    <name type="scientific">Burkholderia orbicola (strain MC0-3)</name>
    <dbReference type="NCBI Taxonomy" id="406425"/>
    <lineage>
        <taxon>Bacteria</taxon>
        <taxon>Pseudomonadati</taxon>
        <taxon>Pseudomonadota</taxon>
        <taxon>Betaproteobacteria</taxon>
        <taxon>Burkholderiales</taxon>
        <taxon>Burkholderiaceae</taxon>
        <taxon>Burkholderia</taxon>
        <taxon>Burkholderia cepacia complex</taxon>
        <taxon>Burkholderia orbicola</taxon>
    </lineage>
</organism>